<reference key="1">
    <citation type="journal article" date="2005" name="Proc. Natl. Acad. Sci. U.S.A.">
        <title>The psychrophilic lifestyle as revealed by the genome sequence of Colwellia psychrerythraea 34H through genomic and proteomic analyses.</title>
        <authorList>
            <person name="Methe B.A."/>
            <person name="Nelson K.E."/>
            <person name="Deming J.W."/>
            <person name="Momen B."/>
            <person name="Melamud E."/>
            <person name="Zhang X."/>
            <person name="Moult J."/>
            <person name="Madupu R."/>
            <person name="Nelson W.C."/>
            <person name="Dodson R.J."/>
            <person name="Brinkac L.M."/>
            <person name="Daugherty S.C."/>
            <person name="Durkin A.S."/>
            <person name="DeBoy R.T."/>
            <person name="Kolonay J.F."/>
            <person name="Sullivan S.A."/>
            <person name="Zhou L."/>
            <person name="Davidsen T.M."/>
            <person name="Wu M."/>
            <person name="Huston A.L."/>
            <person name="Lewis M."/>
            <person name="Weaver B."/>
            <person name="Weidman J.F."/>
            <person name="Khouri H."/>
            <person name="Utterback T.R."/>
            <person name="Feldblyum T.V."/>
            <person name="Fraser C.M."/>
        </authorList>
    </citation>
    <scope>NUCLEOTIDE SEQUENCE [LARGE SCALE GENOMIC DNA]</scope>
    <source>
        <strain>34H / ATCC BAA-681</strain>
    </source>
</reference>
<organism>
    <name type="scientific">Colwellia psychrerythraea (strain 34H / ATCC BAA-681)</name>
    <name type="common">Vibrio psychroerythus</name>
    <dbReference type="NCBI Taxonomy" id="167879"/>
    <lineage>
        <taxon>Bacteria</taxon>
        <taxon>Pseudomonadati</taxon>
        <taxon>Pseudomonadota</taxon>
        <taxon>Gammaproteobacteria</taxon>
        <taxon>Alteromonadales</taxon>
        <taxon>Colwelliaceae</taxon>
        <taxon>Colwellia</taxon>
    </lineage>
</organism>
<feature type="chain" id="PRO_0000227148" description="Anthranilate phosphoribosyltransferase">
    <location>
        <begin position="1"/>
        <end position="365"/>
    </location>
</feature>
<feature type="binding site" evidence="1">
    <location>
        <position position="96"/>
    </location>
    <ligand>
        <name>5-phospho-alpha-D-ribose 1-diphosphate</name>
        <dbReference type="ChEBI" id="CHEBI:58017"/>
    </ligand>
</feature>
<feature type="binding site" evidence="1">
    <location>
        <position position="96"/>
    </location>
    <ligand>
        <name>anthranilate</name>
        <dbReference type="ChEBI" id="CHEBI:16567"/>
        <label>1</label>
    </ligand>
</feature>
<feature type="binding site" evidence="1">
    <location>
        <begin position="99"/>
        <end position="100"/>
    </location>
    <ligand>
        <name>5-phospho-alpha-D-ribose 1-diphosphate</name>
        <dbReference type="ChEBI" id="CHEBI:58017"/>
    </ligand>
</feature>
<feature type="binding site" evidence="1">
    <location>
        <position position="104"/>
    </location>
    <ligand>
        <name>5-phospho-alpha-D-ribose 1-diphosphate</name>
        <dbReference type="ChEBI" id="CHEBI:58017"/>
    </ligand>
</feature>
<feature type="binding site" evidence="1">
    <location>
        <begin position="106"/>
        <end position="109"/>
    </location>
    <ligand>
        <name>5-phospho-alpha-D-ribose 1-diphosphate</name>
        <dbReference type="ChEBI" id="CHEBI:58017"/>
    </ligand>
</feature>
<feature type="binding site" evidence="1">
    <location>
        <position position="108"/>
    </location>
    <ligand>
        <name>Mg(2+)</name>
        <dbReference type="ChEBI" id="CHEBI:18420"/>
        <label>1</label>
    </ligand>
</feature>
<feature type="binding site" evidence="1">
    <location>
        <begin position="124"/>
        <end position="132"/>
    </location>
    <ligand>
        <name>5-phospho-alpha-D-ribose 1-diphosphate</name>
        <dbReference type="ChEBI" id="CHEBI:58017"/>
    </ligand>
</feature>
<feature type="binding site" evidence="1">
    <location>
        <position position="127"/>
    </location>
    <ligand>
        <name>anthranilate</name>
        <dbReference type="ChEBI" id="CHEBI:16567"/>
        <label>1</label>
    </ligand>
</feature>
<feature type="binding site" evidence="1">
    <location>
        <position position="136"/>
    </location>
    <ligand>
        <name>5-phospho-alpha-D-ribose 1-diphosphate</name>
        <dbReference type="ChEBI" id="CHEBI:58017"/>
    </ligand>
</feature>
<feature type="binding site" evidence="1">
    <location>
        <position position="182"/>
    </location>
    <ligand>
        <name>anthranilate</name>
        <dbReference type="ChEBI" id="CHEBI:16567"/>
        <label>2</label>
    </ligand>
</feature>
<feature type="binding site" evidence="1">
    <location>
        <position position="240"/>
    </location>
    <ligand>
        <name>Mg(2+)</name>
        <dbReference type="ChEBI" id="CHEBI:18420"/>
        <label>2</label>
    </ligand>
</feature>
<feature type="binding site" evidence="1">
    <location>
        <position position="241"/>
    </location>
    <ligand>
        <name>Mg(2+)</name>
        <dbReference type="ChEBI" id="CHEBI:18420"/>
        <label>1</label>
    </ligand>
</feature>
<feature type="binding site" evidence="1">
    <location>
        <position position="241"/>
    </location>
    <ligand>
        <name>Mg(2+)</name>
        <dbReference type="ChEBI" id="CHEBI:18420"/>
        <label>2</label>
    </ligand>
</feature>
<keyword id="KW-0028">Amino-acid biosynthesis</keyword>
<keyword id="KW-0057">Aromatic amino acid biosynthesis</keyword>
<keyword id="KW-0328">Glycosyltransferase</keyword>
<keyword id="KW-0460">Magnesium</keyword>
<keyword id="KW-0479">Metal-binding</keyword>
<keyword id="KW-0808">Transferase</keyword>
<keyword id="KW-0822">Tryptophan biosynthesis</keyword>
<accession>Q47YC2</accession>
<gene>
    <name evidence="1" type="primary">trpD</name>
    <name type="ordered locus">CPS_3524</name>
</gene>
<dbReference type="EC" id="2.4.2.18" evidence="1"/>
<dbReference type="EMBL" id="CP000083">
    <property type="protein sequence ID" value="AAZ28064.1"/>
    <property type="molecule type" value="Genomic_DNA"/>
</dbReference>
<dbReference type="RefSeq" id="WP_011044284.1">
    <property type="nucleotide sequence ID" value="NC_003910.7"/>
</dbReference>
<dbReference type="SMR" id="Q47YC2"/>
<dbReference type="STRING" id="167879.CPS_3524"/>
<dbReference type="KEGG" id="cps:CPS_3524"/>
<dbReference type="HOGENOM" id="CLU_034315_2_1_6"/>
<dbReference type="UniPathway" id="UPA00035">
    <property type="reaction ID" value="UER00041"/>
</dbReference>
<dbReference type="Proteomes" id="UP000000547">
    <property type="component" value="Chromosome"/>
</dbReference>
<dbReference type="GO" id="GO:0005829">
    <property type="term" value="C:cytosol"/>
    <property type="evidence" value="ECO:0007669"/>
    <property type="project" value="TreeGrafter"/>
</dbReference>
<dbReference type="GO" id="GO:0004048">
    <property type="term" value="F:anthranilate phosphoribosyltransferase activity"/>
    <property type="evidence" value="ECO:0007669"/>
    <property type="project" value="UniProtKB-UniRule"/>
</dbReference>
<dbReference type="GO" id="GO:0000287">
    <property type="term" value="F:magnesium ion binding"/>
    <property type="evidence" value="ECO:0007669"/>
    <property type="project" value="UniProtKB-UniRule"/>
</dbReference>
<dbReference type="GO" id="GO:0000162">
    <property type="term" value="P:L-tryptophan biosynthetic process"/>
    <property type="evidence" value="ECO:0007669"/>
    <property type="project" value="UniProtKB-UniRule"/>
</dbReference>
<dbReference type="FunFam" id="3.40.1030.10:FF:000002">
    <property type="entry name" value="Anthranilate phosphoribosyltransferase"/>
    <property type="match status" value="1"/>
</dbReference>
<dbReference type="Gene3D" id="3.40.1030.10">
    <property type="entry name" value="Nucleoside phosphorylase/phosphoribosyltransferase catalytic domain"/>
    <property type="match status" value="1"/>
</dbReference>
<dbReference type="Gene3D" id="1.20.970.10">
    <property type="entry name" value="Transferase, Pyrimidine Nucleoside Phosphorylase, Chain C"/>
    <property type="match status" value="1"/>
</dbReference>
<dbReference type="HAMAP" id="MF_00211">
    <property type="entry name" value="TrpD"/>
    <property type="match status" value="1"/>
</dbReference>
<dbReference type="InterPro" id="IPR005940">
    <property type="entry name" value="Anthranilate_Pribosyl_Tfrase"/>
</dbReference>
<dbReference type="InterPro" id="IPR000312">
    <property type="entry name" value="Glycosyl_Trfase_fam3"/>
</dbReference>
<dbReference type="InterPro" id="IPR017459">
    <property type="entry name" value="Glycosyl_Trfase_fam3_N_dom"/>
</dbReference>
<dbReference type="InterPro" id="IPR036320">
    <property type="entry name" value="Glycosyl_Trfase_fam3_N_dom_sf"/>
</dbReference>
<dbReference type="InterPro" id="IPR035902">
    <property type="entry name" value="Nuc_phospho_transferase"/>
</dbReference>
<dbReference type="NCBIfam" id="TIGR01245">
    <property type="entry name" value="trpD"/>
    <property type="match status" value="1"/>
</dbReference>
<dbReference type="PANTHER" id="PTHR43285">
    <property type="entry name" value="ANTHRANILATE PHOSPHORIBOSYLTRANSFERASE"/>
    <property type="match status" value="1"/>
</dbReference>
<dbReference type="PANTHER" id="PTHR43285:SF2">
    <property type="entry name" value="ANTHRANILATE PHOSPHORIBOSYLTRANSFERASE"/>
    <property type="match status" value="1"/>
</dbReference>
<dbReference type="Pfam" id="PF02885">
    <property type="entry name" value="Glycos_trans_3N"/>
    <property type="match status" value="1"/>
</dbReference>
<dbReference type="Pfam" id="PF00591">
    <property type="entry name" value="Glycos_transf_3"/>
    <property type="match status" value="1"/>
</dbReference>
<dbReference type="SUPFAM" id="SSF52418">
    <property type="entry name" value="Nucleoside phosphorylase/phosphoribosyltransferase catalytic domain"/>
    <property type="match status" value="1"/>
</dbReference>
<dbReference type="SUPFAM" id="SSF47648">
    <property type="entry name" value="Nucleoside phosphorylase/phosphoribosyltransferase N-terminal domain"/>
    <property type="match status" value="1"/>
</dbReference>
<name>TRPD_COLP3</name>
<comment type="function">
    <text evidence="1">Catalyzes the transfer of the phosphoribosyl group of 5-phosphorylribose-1-pyrophosphate (PRPP) to anthranilate to yield N-(5'-phosphoribosyl)-anthranilate (PRA).</text>
</comment>
<comment type="catalytic activity">
    <reaction evidence="1">
        <text>N-(5-phospho-beta-D-ribosyl)anthranilate + diphosphate = 5-phospho-alpha-D-ribose 1-diphosphate + anthranilate</text>
        <dbReference type="Rhea" id="RHEA:11768"/>
        <dbReference type="ChEBI" id="CHEBI:16567"/>
        <dbReference type="ChEBI" id="CHEBI:18277"/>
        <dbReference type="ChEBI" id="CHEBI:33019"/>
        <dbReference type="ChEBI" id="CHEBI:58017"/>
        <dbReference type="EC" id="2.4.2.18"/>
    </reaction>
</comment>
<comment type="cofactor">
    <cofactor evidence="1">
        <name>Mg(2+)</name>
        <dbReference type="ChEBI" id="CHEBI:18420"/>
    </cofactor>
    <text evidence="1">Binds 2 magnesium ions per monomer.</text>
</comment>
<comment type="pathway">
    <text evidence="1">Amino-acid biosynthesis; L-tryptophan biosynthesis; L-tryptophan from chorismate: step 2/5.</text>
</comment>
<comment type="subunit">
    <text evidence="1">Homodimer.</text>
</comment>
<comment type="similarity">
    <text evidence="1">Belongs to the anthranilate phosphoribosyltransferase family.</text>
</comment>
<sequence>MASTSAASNELVSSTINTILPTLVDGLDLNQRQSHDFFQQVLQGNIDPALMASVLTALKIKGETPEEIAGAAIAIRAAATPFPERNKEDIVADCVGTGGDGANTINISTTAAVLAAACGLKMAKHGNRSVSSMSGSADLLEAFGVNLSMSPETANHCLAQTNLCFLYAPAYHSGFKYAGPVRKAMGIRTLFNILGPLVNPAKPNIMLLGVYTPELLMPMAQALQLTGVKRAFVVHGSGLDEIALHGNTQAIEINNGELIERTISPQDFGLKNYTLEEIKGGTPAENADIIRDILSGQGKDAHNAAVIVNCAALLYLHDKAESLTQAAQLATEVLASGKGLSTLLTLVKLSNQDVSSTQTELKADK</sequence>
<protein>
    <recommendedName>
        <fullName evidence="1">Anthranilate phosphoribosyltransferase</fullName>
        <ecNumber evidence="1">2.4.2.18</ecNumber>
    </recommendedName>
</protein>
<proteinExistence type="inferred from homology"/>
<evidence type="ECO:0000255" key="1">
    <source>
        <dbReference type="HAMAP-Rule" id="MF_00211"/>
    </source>
</evidence>